<comment type="function">
    <molecule>Capsid protein C</molecule>
    <text evidence="6">Plays a role in virus budding by binding to the cell membrane and gathering the viral RNA into a nucleocapsid that forms the core of a mature virus particle. During virus entry, may induce genome penetration into the host cytoplasm after hemifusion induced by the surface proteins. Can migrate to the cell nucleus where it modulates host functions.</text>
</comment>
<comment type="function">
    <molecule>Capsid protein C</molecule>
    <text evidence="2">Inhibits RNA silencing by interfering with host Dicer.</text>
</comment>
<comment type="function">
    <molecule>Peptide pr</molecule>
    <text evidence="6">Prevents premature fusion activity of envelope proteins in trans-Golgi by binding to envelope protein E at pH6.0. After virion release in extracellular space, gets dissociated from E dimers.</text>
</comment>
<comment type="function">
    <molecule>Protein prM</molecule>
    <text evidence="6">Acts as a chaperone for envelope protein E during intracellular virion assembly by masking and inactivating envelope protein E fusion peptide. prM is the only viral peptide matured by host furin in the trans-Golgi network probably to avoid catastrophic activation of the viral fusion activity in acidic Golgi compartment prior to virion release. prM-E cleavage is inefficient, and many virions are only partially matured. These uncleaved prM would play a role in immune evasion.</text>
</comment>
<comment type="function">
    <molecule>Small envelope protein M</molecule>
    <text evidence="6">May play a role in virus budding. Exerts cytotoxic effects by activating a mitochondrial apoptotic pathway through M ectodomain. May display a viroporin activity.</text>
</comment>
<comment type="function">
    <molecule>Envelope protein E</molecule>
    <text evidence="6">Binds to host cell surface receptor and mediates fusion between viral and cellular membranes. Envelope protein is synthesized in the endoplasmic reticulum in the form of heterodimer with protein prM. They play a role in virion budding in the ER, and the newly formed immature particle is covered with 60 spikes composed of heterodimer between precursor prM and envelope protein E. The virion is transported to the Golgi apparatus where the low pH causes dissociation of PrM-E heterodimers and formation of E homodimers. prM-E cleavage is inefficient, and many virions are only partially matured. These uncleaved prM would play a role in immune evasion.</text>
</comment>
<comment type="function">
    <molecule>Non-structural protein 1</molecule>
    <text evidence="9">Involved in immune evasion, pathogenesis and viral replication. Once cleaved off the polyprotein, is targeted to three destinations: the viral replication cycle, the plasma membrane and the extracellular compartment. Essential for viral replication. Required for formation of the replication complex and recruitment of other non-structural proteins to the ER-derived membrane structures. Excreted as a hexameric lipoparticle that plays a role against host immune response. Antagonizing the complement function. Binds to the host macrophages and dendritic cells. Inhibits signal transduction originating from Toll-like receptor 3 (TLR3).</text>
</comment>
<comment type="function">
    <molecule>Non-structural protein 2A</molecule>
    <text evidence="6">Component of the viral RNA replication complex that functions in virion assembly and antagonizes the host immune response.</text>
</comment>
<comment type="function">
    <molecule>Serine protease subunit NS2B</molecule>
    <text evidence="6 14">Required cofactor for the serine protease function of NS3. May have membrane-destabilizing activity and form viroporins (By similarity).</text>
</comment>
<comment type="function">
    <molecule>Serine protease NS3</molecule>
    <text evidence="2 15">Displays three enzymatic activities: serine protease, NTPase and RNA helicase. NS3 serine protease, in association with NS2B, performs its autocleavage and cleaves the polyprotein at dibasic sites in the cytoplasm: C-prM, NS2A-NS2B, NS2B-NS3, NS3-NS4A, NS4A-2K and NS4B-NS5. NS3 RNA helicase binds RNA and unwinds dsRNA in the 3' to 5' direction. Also plays a role in virus assembly (By similarity).</text>
</comment>
<comment type="function">
    <molecule>Non-structural protein 4A</molecule>
    <text evidence="9">Regulates the ATPase activity of the NS3 helicase activity. NS4A allows NS3 helicase to conserve energy during unwinding.</text>
</comment>
<comment type="function">
    <molecule>Peptide 2k</molecule>
    <text evidence="6">Functions as a signal peptide for NS4B and is required for the interferon antagonism activity of the latter.</text>
</comment>
<comment type="function">
    <molecule>Non-structural protein 4B</molecule>
    <text evidence="9">Induces the formation of ER-derived membrane vesicles where the viral replication takes place. Inhibits interferon (IFN)-induced host STAT1 phosphorylation and nuclear translocation, thereby preventing the establishment of cellular antiviral state by blocking the IFN-alpha/beta pathway.</text>
</comment>
<comment type="function">
    <molecule>RNA-directed RNA polymerase NS5</molecule>
    <text evidence="2">Replicates the viral (+) and (-) RNA genome, and performs the capping of genomes in the cytoplasm. NS5 methylates viral RNA cap at guanine N-7 and ribose 2'-O positions (By similarity). Besides its role in RNA genome replication, also prevents the establishment of cellular antiviral state by blocking the interferon-alpha/beta (IFN-alpha/beta) signaling pathway. IFN-I induces binding of NS5 to host IFN-activated transcription factor STAT2, preventing its transcriptional activity. Host TRIM23 is the E3 ligase that interacts with and polyubiquitinates NS5 to promote its binding to STAT2 and trigger IFN-I signaling inhibition.</text>
</comment>
<comment type="catalytic activity">
    <reaction>
        <text>Selective hydrolysis of -Xaa-Xaa-|-Yaa- bonds in which each of the Xaa can be either Arg or Lys and Yaa can be either Ser or Ala.</text>
        <dbReference type="EC" id="3.4.21.91"/>
    </reaction>
</comment>
<comment type="catalytic activity">
    <reaction evidence="11">
        <text>RNA(n) + a ribonucleoside 5'-triphosphate = RNA(n+1) + diphosphate</text>
        <dbReference type="Rhea" id="RHEA:21248"/>
        <dbReference type="Rhea" id="RHEA-COMP:14527"/>
        <dbReference type="Rhea" id="RHEA-COMP:17342"/>
        <dbReference type="ChEBI" id="CHEBI:33019"/>
        <dbReference type="ChEBI" id="CHEBI:61557"/>
        <dbReference type="ChEBI" id="CHEBI:140395"/>
        <dbReference type="EC" id="2.7.7.48"/>
    </reaction>
</comment>
<comment type="catalytic activity">
    <reaction>
        <text>a ribonucleoside 5'-triphosphate + H2O = a ribonucleoside 5'-diphosphate + phosphate + H(+)</text>
        <dbReference type="Rhea" id="RHEA:23680"/>
        <dbReference type="ChEBI" id="CHEBI:15377"/>
        <dbReference type="ChEBI" id="CHEBI:15378"/>
        <dbReference type="ChEBI" id="CHEBI:43474"/>
        <dbReference type="ChEBI" id="CHEBI:57930"/>
        <dbReference type="ChEBI" id="CHEBI:61557"/>
        <dbReference type="EC" id="3.6.1.15"/>
    </reaction>
</comment>
<comment type="catalytic activity">
    <reaction>
        <text>ATP + H2O = ADP + phosphate + H(+)</text>
        <dbReference type="Rhea" id="RHEA:13065"/>
        <dbReference type="ChEBI" id="CHEBI:15377"/>
        <dbReference type="ChEBI" id="CHEBI:15378"/>
        <dbReference type="ChEBI" id="CHEBI:30616"/>
        <dbReference type="ChEBI" id="CHEBI:43474"/>
        <dbReference type="ChEBI" id="CHEBI:456216"/>
        <dbReference type="EC" id="3.6.4.13"/>
    </reaction>
</comment>
<comment type="catalytic activity">
    <reaction evidence="16">
        <text>a 5'-end (5'-triphosphoguanosine)-ribonucleoside in mRNA + S-adenosyl-L-methionine = a 5'-end (N(7)-methyl 5'-triphosphoguanosine)-ribonucleoside in mRNA + S-adenosyl-L-homocysteine</text>
        <dbReference type="Rhea" id="RHEA:67008"/>
        <dbReference type="Rhea" id="RHEA-COMP:17166"/>
        <dbReference type="Rhea" id="RHEA-COMP:17167"/>
        <dbReference type="ChEBI" id="CHEBI:57856"/>
        <dbReference type="ChEBI" id="CHEBI:59789"/>
        <dbReference type="ChEBI" id="CHEBI:156461"/>
        <dbReference type="ChEBI" id="CHEBI:167617"/>
        <dbReference type="EC" id="2.1.1.56"/>
    </reaction>
</comment>
<comment type="catalytic activity">
    <reaction evidence="16">
        <text>a 5'-end (N(7)-methyl 5'-triphosphoguanosine)-ribonucleoside in mRNA + S-adenosyl-L-methionine = a 5'-end (N(7)-methyl 5'-triphosphoguanosine)-(2'-O-methyl-ribonucleoside) in mRNA + S-adenosyl-L-homocysteine + H(+)</text>
        <dbReference type="Rhea" id="RHEA:67020"/>
        <dbReference type="Rhea" id="RHEA-COMP:17167"/>
        <dbReference type="Rhea" id="RHEA-COMP:17168"/>
        <dbReference type="ChEBI" id="CHEBI:15378"/>
        <dbReference type="ChEBI" id="CHEBI:57856"/>
        <dbReference type="ChEBI" id="CHEBI:59789"/>
        <dbReference type="ChEBI" id="CHEBI:156461"/>
        <dbReference type="ChEBI" id="CHEBI:167609"/>
        <dbReference type="EC" id="2.1.1.57"/>
    </reaction>
</comment>
<comment type="subunit">
    <molecule>Capsid protein C</molecule>
    <text evidence="6">Homodimer (By similarity). Interacts (via N-terminus) with host EXOC1 (via C-terminus); this interaction results in EXOC1 degradation through the proteasome degradation pathway (By similarity).</text>
</comment>
<comment type="subunit">
    <molecule>Protein prM</molecule>
    <text evidence="6">Forms heterodimers with envelope protein E in the endoplasmic reticulum and Golgi.</text>
</comment>
<comment type="subunit">
    <molecule>Envelope protein E</molecule>
    <text evidence="6">Homodimer; in the endoplasmic reticulum and Golgi (By similarity). Interacts with protein prM (By similarity). Interacts with non-structural protein 1 (By similarity).</text>
</comment>
<comment type="subunit">
    <molecule>Non-structural protein 1</molecule>
    <text evidence="9">Homodimer; Homohexamer when secreted (By similarity). Interacts with envelope protein E (By similarity). NS1 interacts with NS4B (By similarity). Interacts with host complement protein CFH; this interaction leads to the degradation of C3 (By similarity).</text>
</comment>
<comment type="subunit">
    <molecule>Non-structural protein 2A</molecule>
    <text evidence="2">Interacts (via N-terminus) with serine protease NS3.</text>
</comment>
<comment type="subunit">
    <molecule>Serine protease subunit NS2B</molecule>
    <text evidence="6">Forms a heterodimer with serine protease NS3 (By similarity). May form homooligomers (By similarity).</text>
</comment>
<comment type="subunit">
    <molecule>Serine protease NS3</molecule>
    <text evidence="6">Forms a heterodimer with NS2B (By similarity). Interacts with non-structural protein 2A (via N-terminus) (By similarity). Interacts with NS4B (By similarity). Interacts with unphosphorylated RNA-directed RNA polymerase NS5; this interaction stimulates RNA-directed RNA polymerase NS5 guanylyltransferase activity (By similarity). NS3 interacts with host PDCD6IP; this interaction contributes to virion release (By similarity).</text>
</comment>
<comment type="subunit">
    <molecule>Non-structural protein 4B</molecule>
    <text evidence="6">Interacts with serine protease NS3 (By similarity).</text>
</comment>
<comment type="subunit">
    <molecule>RNA-directed RNA polymerase NS5</molecule>
    <text evidence="2">Homodimer (By similarity). Interacts with host STAT2; this interaction prevents the establishment of cellular antiviral state (By similarity). Interacts with serine protease NS3 (By similarity). Interacts with host TRIM23; this interaction leads to NS5 ubiquitination (By similarity).</text>
</comment>
<comment type="subcellular location">
    <molecule>Capsid protein C</molecule>
    <subcellularLocation>
        <location evidence="6">Virion</location>
    </subcellularLocation>
    <subcellularLocation>
        <location evidence="6">Host nucleus</location>
    </subcellularLocation>
    <subcellularLocation>
        <location evidence="6">Host cytoplasm</location>
        <location evidence="6">Host perinuclear region</location>
    </subcellularLocation>
    <subcellularLocation>
        <location evidence="6">Host cytoplasm</location>
    </subcellularLocation>
</comment>
<comment type="subcellular location">
    <molecule>Small envelope protein M</molecule>
    <subcellularLocation>
        <location evidence="2">Virion membrane</location>
        <topology evidence="2">Multi-pass membrane protein</topology>
    </subcellularLocation>
    <subcellularLocation>
        <location evidence="2">Host endoplasmic reticulum membrane</location>
        <topology evidence="10">Multi-pass membrane protein</topology>
    </subcellularLocation>
    <text evidence="2">ER membrane retention is mediated by the transmembrane domains.</text>
</comment>
<comment type="subcellular location">
    <molecule>Peptide pr</molecule>
    <subcellularLocation>
        <location evidence="6">Secreted</location>
    </subcellularLocation>
</comment>
<comment type="subcellular location">
    <molecule>Envelope protein E</molecule>
    <subcellularLocation>
        <location evidence="17">Virion membrane</location>
        <topology evidence="2">Multi-pass membrane protein</topology>
    </subcellularLocation>
    <subcellularLocation>
        <location evidence="2">Host endoplasmic reticulum membrane</location>
        <topology evidence="10">Multi-pass membrane protein</topology>
    </subcellularLocation>
    <text evidence="2">ER membrane retention is mediated by the transmembrane domains.</text>
</comment>
<comment type="subcellular location">
    <molecule>Non-structural protein 1</molecule>
    <subcellularLocation>
        <location evidence="6">Secreted</location>
    </subcellularLocation>
    <subcellularLocation>
        <location>Host endoplasmic reticulum membrane</location>
        <topology>Peripheral membrane protein</topology>
        <orientation evidence="6">Lumenal side</orientation>
    </subcellularLocation>
    <text evidence="9">Located in RE-derived vesicles hosting the replication complex.</text>
</comment>
<comment type="subcellular location">
    <molecule>Non-structural protein 2A</molecule>
    <subcellularLocation>
        <location evidence="6">Host endoplasmic reticulum membrane</location>
        <topology evidence="6">Multi-pass membrane protein</topology>
    </subcellularLocation>
</comment>
<comment type="subcellular location">
    <molecule>Serine protease subunit NS2B</molecule>
    <subcellularLocation>
        <location>Host endoplasmic reticulum membrane</location>
        <topology evidence="6">Multi-pass membrane protein</topology>
    </subcellularLocation>
</comment>
<comment type="subcellular location">
    <molecule>Serine protease NS3</molecule>
    <subcellularLocation>
        <location evidence="15">Host endoplasmic reticulum membrane</location>
        <topology evidence="15">Peripheral membrane protein</topology>
        <orientation evidence="15">Cytoplasmic side</orientation>
    </subcellularLocation>
    <text evidence="15">Remains non-covalently associated to serine protease subunit NS2B.</text>
</comment>
<comment type="subcellular location">
    <molecule>Non-structural protein 4A</molecule>
    <subcellularLocation>
        <location evidence="6">Host endoplasmic reticulum membrane</location>
        <topology evidence="6">Multi-pass membrane protein</topology>
    </subcellularLocation>
    <text evidence="6">Located in RE-associated vesicles hosting the replication complex.</text>
</comment>
<comment type="subcellular location">
    <molecule>Non-structural protein 4B</molecule>
    <subcellularLocation>
        <location evidence="6">Host endoplasmic reticulum membrane</location>
        <topology evidence="6">Multi-pass membrane protein</topology>
    </subcellularLocation>
    <text evidence="9">Located in RE-derived vesicles hosting the replication complex.</text>
</comment>
<comment type="subcellular location">
    <molecule>RNA-directed RNA polymerase NS5</molecule>
    <subcellularLocation>
        <location>Host endoplasmic reticulum membrane</location>
        <topology>Peripheral membrane protein</topology>
        <orientation>Cytoplasmic side</orientation>
    </subcellularLocation>
    <subcellularLocation>
        <location evidence="6">Host nucleus</location>
    </subcellularLocation>
    <text evidence="6">Located in RE-associated vesicles hosting the replication complex. NS5 protein is mainly localized in the nucleus rather than in ER vesicles.</text>
</comment>
<comment type="domain">
    <text evidence="6">The transmembrane domains of the small envelope protein M and envelope protein E contain an endoplasmic reticulum retention signal.</text>
</comment>
<comment type="PTM">
    <molecule>Genome polyprotein</molecule>
    <text evidence="2">Specific enzymatic cleavages in vivo yield mature proteins. The nascent capsid protein C contains a C-terminal hydrophobic domain that act as a signal sequence for translocation of prM into the lumen of the ER. Mature capsid protein C is cleaved at a site upstream of this hydrophobic domain by NS3. prM is cleaved in post-Golgi vesicles by a host furin, releasing the mature small envelope protein M, and peptide pr. Non-structural protein 2A-alpha, a C-terminally truncated form of non-structural protein 2A, results from partial cleavage by NS3. Specific enzymatic cleavages in vivo yield mature proteins peptide 2K acts as a signal sequence and is removed from the N-terminus of NS4B by the host signal peptidase in the ER lumen. Signal cleavage at the 2K-4B site requires a prior NS3 protease-mediated cleavage at the 4A-2K site.</text>
</comment>
<comment type="PTM">
    <molecule>Protein prM</molecule>
    <text evidence="6">Cleaved in post-Golgi vesicles by a host furin, releasing the mature small envelope protein M, and peptide pr. This cleavage is incomplete as up to 30% of viral particles still carry uncleaved prM.</text>
</comment>
<comment type="PTM">
    <molecule>Envelope protein E</molecule>
    <text evidence="6">N-glycosylated.</text>
</comment>
<comment type="PTM">
    <molecule>Non-structural protein 1</molecule>
    <text evidence="6">N-glycosylated. The excreted form is glycosylated and this is required for efficient secretion of the protein from infected cells.</text>
</comment>
<comment type="PTM">
    <text evidence="2">Polyubiquitinated; ubiquitination is probably mediated by host TRIM23 and is prerequisite for NS5-STAT2 interaction. NS5 is not ISGylated or sumoylated.</text>
</comment>
<comment type="PTM">
    <molecule>RNA-directed RNA polymerase NS5</molecule>
    <text evidence="6">Phosphorylated on serines residues. This phosphorylation may trigger NS5 nuclear localization.</text>
</comment>
<comment type="similarity">
    <text evidence="16">In the N-terminal section; belongs to the class I-like SAM-binding methyltransferase superfamily. mRNA cap 0-1 NS5-type methyltransferase family.</text>
</comment>
<organism>
    <name type="scientific">Edge Hill virus</name>
    <name type="common">EHV</name>
    <dbReference type="NCBI Taxonomy" id="64296"/>
    <lineage>
        <taxon>Viruses</taxon>
        <taxon>Riboviria</taxon>
        <taxon>Orthornavirae</taxon>
        <taxon>Kitrinoviricota</taxon>
        <taxon>Flasuviricetes</taxon>
        <taxon>Amarillovirales</taxon>
        <taxon>Flaviviridae</taxon>
        <taxon>Orthoflavivirus</taxon>
        <taxon>Orthoflavivirus edgehillense</taxon>
    </lineage>
</organism>
<keyword id="KW-1072">Activation of host autophagy by virus</keyword>
<keyword id="KW-0067">ATP-binding</keyword>
<keyword id="KW-0167">Capsid protein</keyword>
<keyword id="KW-1015">Disulfide bond</keyword>
<keyword id="KW-1170">Fusion of virus membrane with host endosomal membrane</keyword>
<keyword id="KW-1168">Fusion of virus membrane with host membrane</keyword>
<keyword id="KW-0325">Glycoprotein</keyword>
<keyword id="KW-0342">GTP-binding</keyword>
<keyword id="KW-0347">Helicase</keyword>
<keyword id="KW-1035">Host cytoplasm</keyword>
<keyword id="KW-1038">Host endoplasmic reticulum</keyword>
<keyword id="KW-1043">Host membrane</keyword>
<keyword id="KW-1048">Host nucleus</keyword>
<keyword id="KW-0945">Host-virus interaction</keyword>
<keyword id="KW-0378">Hydrolase</keyword>
<keyword id="KW-1090">Inhibition of host innate immune response by virus</keyword>
<keyword id="KW-1114">Inhibition of host interferon signaling pathway by virus</keyword>
<keyword id="KW-1105">Inhibition of host STAT1 by virus</keyword>
<keyword id="KW-1106">Inhibition of host STAT2 by virus</keyword>
<keyword id="KW-0922">Interferon antiviral system evasion</keyword>
<keyword id="KW-0472">Membrane</keyword>
<keyword id="KW-0479">Metal-binding</keyword>
<keyword id="KW-0489">Methyltransferase</keyword>
<keyword id="KW-0506">mRNA capping</keyword>
<keyword id="KW-0507">mRNA processing</keyword>
<keyword id="KW-0547">Nucleotide-binding</keyword>
<keyword id="KW-0548">Nucleotidyltransferase</keyword>
<keyword id="KW-0597">Phosphoprotein</keyword>
<keyword id="KW-0645">Protease</keyword>
<keyword id="KW-0694">RNA-binding</keyword>
<keyword id="KW-0696">RNA-directed RNA polymerase</keyword>
<keyword id="KW-0949">S-adenosyl-L-methionine</keyword>
<keyword id="KW-0964">Secreted</keyword>
<keyword id="KW-0720">Serine protease</keyword>
<keyword id="KW-0941">Suppressor of RNA silencing</keyword>
<keyword id="KW-0808">Transferase</keyword>
<keyword id="KW-0812">Transmembrane</keyword>
<keyword id="KW-1133">Transmembrane helix</keyword>
<keyword id="KW-0832">Ubl conjugation</keyword>
<keyword id="KW-1161">Viral attachment to host cell</keyword>
<keyword id="KW-0899">Viral immunoevasion</keyword>
<keyword id="KW-1162">Viral penetration into host cytoplasm</keyword>
<keyword id="KW-0693">Viral RNA replication</keyword>
<keyword id="KW-0946">Virion</keyword>
<keyword id="KW-1160">Virus entry into host cell</keyword>
<keyword id="KW-0862">Zinc</keyword>
<dbReference type="EC" id="3.4.21.91"/>
<dbReference type="EC" id="3.6.1.15" evidence="9"/>
<dbReference type="EC" id="3.6.4.13" evidence="9"/>
<dbReference type="EC" id="2.1.1.56" evidence="16"/>
<dbReference type="EC" id="2.1.1.57" evidence="16"/>
<dbReference type="EC" id="2.7.7.48" evidence="11"/>
<dbReference type="EMBL" id="DQ859060">
    <property type="protein sequence ID" value="ABI54476.1"/>
    <property type="molecule type" value="Genomic_RNA"/>
</dbReference>
<dbReference type="RefSeq" id="YP_009256192.1">
    <property type="nucleotide sequence ID" value="NC_030289.1"/>
</dbReference>
<dbReference type="SMR" id="C8XPB2"/>
<dbReference type="MEROPS" id="S07.001"/>
<dbReference type="GeneID" id="27964207"/>
<dbReference type="KEGG" id="vg:27964207"/>
<dbReference type="Proteomes" id="UP000136711">
    <property type="component" value="Genome"/>
</dbReference>
<dbReference type="GO" id="GO:0005576">
    <property type="term" value="C:extracellular region"/>
    <property type="evidence" value="ECO:0007669"/>
    <property type="project" value="UniProtKB-SubCell"/>
</dbReference>
<dbReference type="GO" id="GO:0044167">
    <property type="term" value="C:host cell endoplasmic reticulum membrane"/>
    <property type="evidence" value="ECO:0007669"/>
    <property type="project" value="UniProtKB-SubCell"/>
</dbReference>
<dbReference type="GO" id="GO:0042025">
    <property type="term" value="C:host cell nucleus"/>
    <property type="evidence" value="ECO:0007669"/>
    <property type="project" value="UniProtKB-SubCell"/>
</dbReference>
<dbReference type="GO" id="GO:0044220">
    <property type="term" value="C:host cell perinuclear region of cytoplasm"/>
    <property type="evidence" value="ECO:0007669"/>
    <property type="project" value="UniProtKB-SubCell"/>
</dbReference>
<dbReference type="GO" id="GO:0016020">
    <property type="term" value="C:membrane"/>
    <property type="evidence" value="ECO:0007669"/>
    <property type="project" value="UniProtKB-KW"/>
</dbReference>
<dbReference type="GO" id="GO:0019028">
    <property type="term" value="C:viral capsid"/>
    <property type="evidence" value="ECO:0007669"/>
    <property type="project" value="UniProtKB-KW"/>
</dbReference>
<dbReference type="GO" id="GO:0055036">
    <property type="term" value="C:virion membrane"/>
    <property type="evidence" value="ECO:0007669"/>
    <property type="project" value="UniProtKB-SubCell"/>
</dbReference>
<dbReference type="GO" id="GO:0005524">
    <property type="term" value="F:ATP binding"/>
    <property type="evidence" value="ECO:0007669"/>
    <property type="project" value="UniProtKB-KW"/>
</dbReference>
<dbReference type="GO" id="GO:0016887">
    <property type="term" value="F:ATP hydrolysis activity"/>
    <property type="evidence" value="ECO:0007669"/>
    <property type="project" value="RHEA"/>
</dbReference>
<dbReference type="GO" id="GO:0003725">
    <property type="term" value="F:double-stranded RNA binding"/>
    <property type="evidence" value="ECO:0007669"/>
    <property type="project" value="InterPro"/>
</dbReference>
<dbReference type="GO" id="GO:0005525">
    <property type="term" value="F:GTP binding"/>
    <property type="evidence" value="ECO:0007669"/>
    <property type="project" value="UniProtKB-KW"/>
</dbReference>
<dbReference type="GO" id="GO:0046872">
    <property type="term" value="F:metal ion binding"/>
    <property type="evidence" value="ECO:0007669"/>
    <property type="project" value="UniProtKB-KW"/>
</dbReference>
<dbReference type="GO" id="GO:0004483">
    <property type="term" value="F:mRNA (nucleoside-2'-O-)-methyltransferase activity"/>
    <property type="evidence" value="ECO:0007669"/>
    <property type="project" value="UniProtKB-EC"/>
</dbReference>
<dbReference type="GO" id="GO:0004482">
    <property type="term" value="F:mRNA 5'-cap (guanine-N7-)-methyltransferase activity"/>
    <property type="evidence" value="ECO:0007669"/>
    <property type="project" value="UniProtKB-EC"/>
</dbReference>
<dbReference type="GO" id="GO:0046983">
    <property type="term" value="F:protein dimerization activity"/>
    <property type="evidence" value="ECO:0007669"/>
    <property type="project" value="InterPro"/>
</dbReference>
<dbReference type="GO" id="GO:0003724">
    <property type="term" value="F:RNA helicase activity"/>
    <property type="evidence" value="ECO:0007669"/>
    <property type="project" value="UniProtKB-EC"/>
</dbReference>
<dbReference type="GO" id="GO:0003968">
    <property type="term" value="F:RNA-directed RNA polymerase activity"/>
    <property type="evidence" value="ECO:0007669"/>
    <property type="project" value="UniProtKB-KW"/>
</dbReference>
<dbReference type="GO" id="GO:0004252">
    <property type="term" value="F:serine-type endopeptidase activity"/>
    <property type="evidence" value="ECO:0007669"/>
    <property type="project" value="InterPro"/>
</dbReference>
<dbReference type="GO" id="GO:0005198">
    <property type="term" value="F:structural molecule activity"/>
    <property type="evidence" value="ECO:0007669"/>
    <property type="project" value="InterPro"/>
</dbReference>
<dbReference type="GO" id="GO:0039654">
    <property type="term" value="P:fusion of virus membrane with host endosome membrane"/>
    <property type="evidence" value="ECO:0007669"/>
    <property type="project" value="UniProtKB-KW"/>
</dbReference>
<dbReference type="GO" id="GO:0006508">
    <property type="term" value="P:proteolysis"/>
    <property type="evidence" value="ECO:0007669"/>
    <property type="project" value="UniProtKB-KW"/>
</dbReference>
<dbReference type="GO" id="GO:0046718">
    <property type="term" value="P:symbiont entry into host cell"/>
    <property type="evidence" value="ECO:0007669"/>
    <property type="project" value="UniProtKB-KW"/>
</dbReference>
<dbReference type="GO" id="GO:0039520">
    <property type="term" value="P:symbiont-mediated activation of host autophagy"/>
    <property type="evidence" value="ECO:0007669"/>
    <property type="project" value="UniProtKB-KW"/>
</dbReference>
<dbReference type="GO" id="GO:0052170">
    <property type="term" value="P:symbiont-mediated suppression of host innate immune response"/>
    <property type="evidence" value="ECO:0007669"/>
    <property type="project" value="UniProtKB-KW"/>
</dbReference>
<dbReference type="GO" id="GO:0039563">
    <property type="term" value="P:symbiont-mediated suppression of host JAK-STAT cascade via inhibition of STAT1 activity"/>
    <property type="evidence" value="ECO:0007669"/>
    <property type="project" value="UniProtKB-KW"/>
</dbReference>
<dbReference type="GO" id="GO:0039564">
    <property type="term" value="P:symbiont-mediated suppression of host JAK-STAT cascade via inhibition of STAT2 activity"/>
    <property type="evidence" value="ECO:0007669"/>
    <property type="project" value="UniProtKB-KW"/>
</dbReference>
<dbReference type="GO" id="GO:0039502">
    <property type="term" value="P:symbiont-mediated suppression of host type I interferon-mediated signaling pathway"/>
    <property type="evidence" value="ECO:0007669"/>
    <property type="project" value="UniProtKB-KW"/>
</dbReference>
<dbReference type="GO" id="GO:0039694">
    <property type="term" value="P:viral RNA genome replication"/>
    <property type="evidence" value="ECO:0007669"/>
    <property type="project" value="InterPro"/>
</dbReference>
<dbReference type="GO" id="GO:0019062">
    <property type="term" value="P:virion attachment to host cell"/>
    <property type="evidence" value="ECO:0007669"/>
    <property type="project" value="UniProtKB-KW"/>
</dbReference>
<dbReference type="CDD" id="cd20761">
    <property type="entry name" value="capping_2-OMTase_Flaviviridae"/>
    <property type="match status" value="1"/>
</dbReference>
<dbReference type="CDD" id="cd17931">
    <property type="entry name" value="DEXHc_viral_Ns3"/>
    <property type="match status" value="1"/>
</dbReference>
<dbReference type="CDD" id="cd12149">
    <property type="entry name" value="Flavi_E_C"/>
    <property type="match status" value="1"/>
</dbReference>
<dbReference type="CDD" id="cd17038">
    <property type="entry name" value="Flavi_M"/>
    <property type="match status" value="1"/>
</dbReference>
<dbReference type="CDD" id="cd23204">
    <property type="entry name" value="Flavivirus_RdRp"/>
    <property type="match status" value="1"/>
</dbReference>
<dbReference type="Gene3D" id="1.10.260.90">
    <property type="match status" value="1"/>
</dbReference>
<dbReference type="Gene3D" id="1.20.1280.260">
    <property type="match status" value="1"/>
</dbReference>
<dbReference type="Gene3D" id="2.40.10.120">
    <property type="match status" value="2"/>
</dbReference>
<dbReference type="Gene3D" id="2.60.40.350">
    <property type="match status" value="1"/>
</dbReference>
<dbReference type="Gene3D" id="1.10.8.970">
    <property type="entry name" value="Flavivirus envelope glycoprotein M-like"/>
    <property type="match status" value="1"/>
</dbReference>
<dbReference type="Gene3D" id="2.60.260.50">
    <property type="entry name" value="Flavivirus polyprotein propeptide domain"/>
    <property type="match status" value="1"/>
</dbReference>
<dbReference type="Gene3D" id="3.30.70.2840">
    <property type="entry name" value="Flavivirus RNA-directed RNA polymerase, thumb domain"/>
    <property type="match status" value="3"/>
</dbReference>
<dbReference type="Gene3D" id="3.40.50.300">
    <property type="entry name" value="P-loop containing nucleotide triphosphate hydrolases"/>
    <property type="match status" value="2"/>
</dbReference>
<dbReference type="Gene3D" id="2.60.98.10">
    <property type="entry name" value="Tick-borne Encephalitis virus Glycoprotein, domain 1"/>
    <property type="match status" value="1"/>
</dbReference>
<dbReference type="Gene3D" id="2.40.10.10">
    <property type="entry name" value="Trypsin-like serine proteases"/>
    <property type="match status" value="1"/>
</dbReference>
<dbReference type="Gene3D" id="3.40.50.150">
    <property type="entry name" value="Vaccinia Virus protein VP39"/>
    <property type="match status" value="1"/>
</dbReference>
<dbReference type="Gene3D" id="3.30.67.10">
    <property type="entry name" value="Viral Envelope Glycoprotein, domain 2"/>
    <property type="match status" value="1"/>
</dbReference>
<dbReference type="Gene3D" id="3.30.387.10">
    <property type="entry name" value="Viral Envelope Glycoprotein, domain 3"/>
    <property type="match status" value="1"/>
</dbReference>
<dbReference type="InterPro" id="IPR043502">
    <property type="entry name" value="DNA/RNA_pol_sf"/>
</dbReference>
<dbReference type="InterPro" id="IPR000069">
    <property type="entry name" value="Env_glycoprot_M_flavivir"/>
</dbReference>
<dbReference type="InterPro" id="IPR038302">
    <property type="entry name" value="Env_glycoprot_M_sf_flavivir"/>
</dbReference>
<dbReference type="InterPro" id="IPR013755">
    <property type="entry name" value="Flav_gly_cen_dom_subdom1"/>
</dbReference>
<dbReference type="InterPro" id="IPR001122">
    <property type="entry name" value="Flavi_capsidC"/>
</dbReference>
<dbReference type="InterPro" id="IPR011492">
    <property type="entry name" value="Flavi_DEAD"/>
</dbReference>
<dbReference type="InterPro" id="IPR027287">
    <property type="entry name" value="Flavi_E_Ig-like"/>
</dbReference>
<dbReference type="InterPro" id="IPR026470">
    <property type="entry name" value="Flavi_E_Stem/Anchor_dom"/>
</dbReference>
<dbReference type="InterPro" id="IPR038345">
    <property type="entry name" value="Flavi_E_Stem/Anchor_dom_sf"/>
</dbReference>
<dbReference type="InterPro" id="IPR011998">
    <property type="entry name" value="Flavi_Glycoprot_E_cen/dimer"/>
</dbReference>
<dbReference type="InterPro" id="IPR001157">
    <property type="entry name" value="Flavi_NS1"/>
</dbReference>
<dbReference type="InterPro" id="IPR000752">
    <property type="entry name" value="Flavi_NS2A"/>
</dbReference>
<dbReference type="InterPro" id="IPR000487">
    <property type="entry name" value="Flavi_NS2B"/>
</dbReference>
<dbReference type="InterPro" id="IPR001850">
    <property type="entry name" value="Flavi_NS3_S7"/>
</dbReference>
<dbReference type="InterPro" id="IPR000404">
    <property type="entry name" value="Flavi_NS4A"/>
</dbReference>
<dbReference type="InterPro" id="IPR001528">
    <property type="entry name" value="Flavi_NS4B"/>
</dbReference>
<dbReference type="InterPro" id="IPR046811">
    <property type="entry name" value="Flavi_NS5_thumb"/>
</dbReference>
<dbReference type="InterPro" id="IPR002535">
    <property type="entry name" value="Flavi_propep"/>
</dbReference>
<dbReference type="InterPro" id="IPR038688">
    <property type="entry name" value="Flavi_propep_sf"/>
</dbReference>
<dbReference type="InterPro" id="IPR047530">
    <property type="entry name" value="Flavi_RdRp"/>
</dbReference>
<dbReference type="InterPro" id="IPR000208">
    <property type="entry name" value="Flavi_RdRp_fingers/palm"/>
</dbReference>
<dbReference type="InterPro" id="IPR000336">
    <property type="entry name" value="Flavivir/Alphavir_Ig-like_sf"/>
</dbReference>
<dbReference type="InterPro" id="IPR014412">
    <property type="entry name" value="Gen_Poly_FLV"/>
</dbReference>
<dbReference type="InterPro" id="IPR036253">
    <property type="entry name" value="Glycoprot_cen/dimer_sf"/>
</dbReference>
<dbReference type="InterPro" id="IPR038055">
    <property type="entry name" value="Glycoprot_E_dimer_dom"/>
</dbReference>
<dbReference type="InterPro" id="IPR013756">
    <property type="entry name" value="GlyE_cen_dom_subdom2"/>
</dbReference>
<dbReference type="InterPro" id="IPR014001">
    <property type="entry name" value="Helicase_ATP-bd"/>
</dbReference>
<dbReference type="InterPro" id="IPR001650">
    <property type="entry name" value="Helicase_C-like"/>
</dbReference>
<dbReference type="InterPro" id="IPR014756">
    <property type="entry name" value="Ig_E-set"/>
</dbReference>
<dbReference type="InterPro" id="IPR026490">
    <property type="entry name" value="mRNA_cap_0/1_MeTrfase"/>
</dbReference>
<dbReference type="InterPro" id="IPR049486">
    <property type="entry name" value="NS3-hel_C_flaviviridae"/>
</dbReference>
<dbReference type="InterPro" id="IPR027417">
    <property type="entry name" value="P-loop_NTPase"/>
</dbReference>
<dbReference type="InterPro" id="IPR009003">
    <property type="entry name" value="Peptidase_S1_PA"/>
</dbReference>
<dbReference type="InterPro" id="IPR043504">
    <property type="entry name" value="Peptidase_S1_PA_chymotrypsin"/>
</dbReference>
<dbReference type="InterPro" id="IPR007094">
    <property type="entry name" value="RNA-dir_pol_PSvirus"/>
</dbReference>
<dbReference type="InterPro" id="IPR002877">
    <property type="entry name" value="RNA_MeTrfase_FtsJ_dom"/>
</dbReference>
<dbReference type="InterPro" id="IPR029063">
    <property type="entry name" value="SAM-dependent_MTases_sf"/>
</dbReference>
<dbReference type="NCBIfam" id="TIGR04240">
    <property type="entry name" value="flavi_E_stem"/>
    <property type="match status" value="1"/>
</dbReference>
<dbReference type="Pfam" id="PF20907">
    <property type="entry name" value="Flav_NS3-hel_C"/>
    <property type="match status" value="1"/>
</dbReference>
<dbReference type="Pfam" id="PF01003">
    <property type="entry name" value="Flavi_capsid"/>
    <property type="match status" value="1"/>
</dbReference>
<dbReference type="Pfam" id="PF07652">
    <property type="entry name" value="Flavi_DEAD"/>
    <property type="match status" value="1"/>
</dbReference>
<dbReference type="Pfam" id="PF21659">
    <property type="entry name" value="Flavi_E_stem"/>
    <property type="match status" value="1"/>
</dbReference>
<dbReference type="Pfam" id="PF02832">
    <property type="entry name" value="Flavi_glycop_C"/>
    <property type="match status" value="1"/>
</dbReference>
<dbReference type="Pfam" id="PF00869">
    <property type="entry name" value="Flavi_glycoprot"/>
    <property type="match status" value="1"/>
</dbReference>
<dbReference type="Pfam" id="PF01004">
    <property type="entry name" value="Flavi_M"/>
    <property type="match status" value="1"/>
</dbReference>
<dbReference type="Pfam" id="PF00948">
    <property type="entry name" value="Flavi_NS1"/>
    <property type="match status" value="1"/>
</dbReference>
<dbReference type="Pfam" id="PF01005">
    <property type="entry name" value="Flavi_NS2A"/>
    <property type="match status" value="1"/>
</dbReference>
<dbReference type="Pfam" id="PF01002">
    <property type="entry name" value="Flavi_NS2B"/>
    <property type="match status" value="1"/>
</dbReference>
<dbReference type="Pfam" id="PF01350">
    <property type="entry name" value="Flavi_NS4A"/>
    <property type="match status" value="1"/>
</dbReference>
<dbReference type="Pfam" id="PF01349">
    <property type="entry name" value="Flavi_NS4B"/>
    <property type="match status" value="1"/>
</dbReference>
<dbReference type="Pfam" id="PF00972">
    <property type="entry name" value="Flavi_NS5"/>
    <property type="match status" value="1"/>
</dbReference>
<dbReference type="Pfam" id="PF20483">
    <property type="entry name" value="Flavi_NS5_thumb"/>
    <property type="match status" value="1"/>
</dbReference>
<dbReference type="Pfam" id="PF01570">
    <property type="entry name" value="Flavi_propep"/>
    <property type="match status" value="1"/>
</dbReference>
<dbReference type="Pfam" id="PF01728">
    <property type="entry name" value="FtsJ"/>
    <property type="match status" value="1"/>
</dbReference>
<dbReference type="Pfam" id="PF00949">
    <property type="entry name" value="Peptidase_S7"/>
    <property type="match status" value="1"/>
</dbReference>
<dbReference type="PIRSF" id="PIRSF003817">
    <property type="entry name" value="Gen_Poly_FLV"/>
    <property type="match status" value="1"/>
</dbReference>
<dbReference type="SMART" id="SM00487">
    <property type="entry name" value="DEXDc"/>
    <property type="match status" value="1"/>
</dbReference>
<dbReference type="SMART" id="SM00490">
    <property type="entry name" value="HELICc"/>
    <property type="match status" value="1"/>
</dbReference>
<dbReference type="SUPFAM" id="SSF56672">
    <property type="entry name" value="DNA/RNA polymerases"/>
    <property type="match status" value="1"/>
</dbReference>
<dbReference type="SUPFAM" id="SSF81296">
    <property type="entry name" value="E set domains"/>
    <property type="match status" value="1"/>
</dbReference>
<dbReference type="SUPFAM" id="SSF52540">
    <property type="entry name" value="P-loop containing nucleoside triphosphate hydrolases"/>
    <property type="match status" value="2"/>
</dbReference>
<dbReference type="SUPFAM" id="SSF53335">
    <property type="entry name" value="S-adenosyl-L-methionine-dependent methyltransferases"/>
    <property type="match status" value="1"/>
</dbReference>
<dbReference type="SUPFAM" id="SSF50494">
    <property type="entry name" value="Trypsin-like serine proteases"/>
    <property type="match status" value="1"/>
</dbReference>
<dbReference type="SUPFAM" id="SSF56983">
    <property type="entry name" value="Viral glycoprotein, central and dimerisation domains"/>
    <property type="match status" value="1"/>
</dbReference>
<dbReference type="PROSITE" id="PS51527">
    <property type="entry name" value="FLAVIVIRUS_NS2B"/>
    <property type="match status" value="1"/>
</dbReference>
<dbReference type="PROSITE" id="PS51528">
    <property type="entry name" value="FLAVIVIRUS_NS3PRO"/>
    <property type="match status" value="1"/>
</dbReference>
<dbReference type="PROSITE" id="PS51192">
    <property type="entry name" value="HELICASE_ATP_BIND_1"/>
    <property type="match status" value="1"/>
</dbReference>
<dbReference type="PROSITE" id="PS51194">
    <property type="entry name" value="HELICASE_CTER"/>
    <property type="match status" value="1"/>
</dbReference>
<dbReference type="PROSITE" id="PS50507">
    <property type="entry name" value="RDRP_SSRNA_POS"/>
    <property type="match status" value="1"/>
</dbReference>
<dbReference type="PROSITE" id="PS51591">
    <property type="entry name" value="RNA_CAP01_NS5_MT"/>
    <property type="match status" value="1"/>
</dbReference>
<sequence length="3401" mass="377294">MPVRPRNKPKGVNVMAAGKVAQKIKNKLKSKAKAIGNISKGLRGFILFILAQIFWARKLTPRVRTMWKKVDKAKATRVLKGIRNIATQLITGLAGRKKRRSMTHGIILSLGVTMVIGASLHHHGGRYLLNVTHADLGKTFTIGSGNCTANIVEAGSWCSDSMEYECVTLAEAEEPDDIDCWCRGVERVRVTYGRCKNGLDSRRSRRAAVITAHIDKGLTTRQEKWLSTSMGERQIQRIERWMMRNPFYAAISLLLAWWVGSDIKQKVLIAFLVLAIGPAYSTHCVGIPKRDFVQGVQGNTWVNLVLDQGSCVTLSSDNKPSVDIWLDSIFISSPVLVRRVSHTATISDTKVQTACPTNGEAKLEEEASAEYECKKTYSDRGWGNGCGLFGKGSIVACAKYTSTGHMDVYEIDSTKIEYVTKAQVHAGMKHDDTTMVKEVKFEPTTGSMDVEFTGYGTLGLECHVQTMVDMANYYLVVMGQEAWLVHKQWVEDITLPWKIGEGGFWRDKHYMVEFTEPHATTMTVMVLGAQEGALRTALAGAMVVTYTDSSGTKKFSLKGGHVSCKARMNGLVLKGSTYTMCKGGFSFVKTPTDTGHGTAVMQVKVSKGTPCRIPVQAVDSSNGGTNRATLITANPIAATTEDEVMIELSPPYGESYIMIGTGDDKLTYHWHKSGSTIGSLFTETYKGAQRMAIIGDDAWDFSSSSNFFNSIGKALHTVFGNVFHSIFGGLSWITKIILGGMFLWLGVNSRNQTMCMVLMAVGGILLFMTLGVSGEVGCSLDIKRRELKCGDGLFLFNDVNDWTHKYKFHPEDPKLLASLIKKSHQEGRCGLSSVNEVEHRMWNSIKTEINAMFEENGVDLSVVVKDSKLHYKMGSHAFPKVEEGLSLGWKNWGKSLVFEPKQSNVSFIIDGTSEDCPFTNRIWNAFVVEEFGIGMFTTNVFLTHKVDFTKQCDASLLGAGVKGDVAVHGDPTLWMESRKENGTWQLHTIQMNGLRECFWPQTHTIHGSSVMESAMFLPKQYGGPVSHHNHYTGYAVQTAGPWNVQPLIVKRETCPGTQVRVDEQCRDRGNSVRSTTSEGKIIPEWCCRSCTLPPVSFWGPDSCWYAMEIRPQNVHEEHLVRSWASAGTGMAESSLGLVALFLFTDIFARKRMTRKFMVIGCLGVLSVMIVGGFTALDLIRYIIVVGQHFASMNHGGDVAYLAIIAVGKLRPGLLMMYSFKAAWSPKERVMVALGLLVFQAVLGDFVHTGLWEWADAAGMCILIIQGMATRKEKTYIMPILALLTPLSMEIIRKTGIFACVGLLGLSLWRGGDTTMRKGMPLLAGAATAASGLTRASLSVVFILCATAASRRSWPIGEIMAIVGIVGTGFGMAVNDQASLAGPMLVFGLIMIVYATLGRADGLTLKRVGDITWEEEAVHSGSSTRYDVTLNEAGEFKLVHEEPVVWSHVVFLVVALIAASVHPIALVVVTIIWTYGKKHLRGGVLWDIPIAPPVEEAEPLEDGVYAILQSGLMGKAQAGVGVAQEGVFHTMWHVTRGGFLMVGGKRLTPHWASVKRDLICYGGNWKLDGKWDGVEEVQLIAVAPGKAPTNVQTKPGVFRMADGTEIGAVALDYPSGTSGSPIVNEKGQVIGLYGNGIVIGGSGYVSSIAQIAGGEGVTEEPLLDTATMLRKGKLTVLDYHPGAGKTRIFLPYILKECVRRKLRTLVLAPTRVVLSEMREALRDVAVKYHTQAFQAAGTGRELVDAMCHATLSHRMLESSRSVNWEVIIMDEAHYMDPTSIAARGWAAHKANNHESAVIFMTATPPGSANEFPESNGEIEDLRRDIPTEPWNKGHEWILEDRRPTVWFLPSIRAANNIAACLRRSERSVVVLNRQTFETVYPTIKTKKPDFILATDIAEMGANLGVERVIDCRTSYKPVLTTDGRVVIKGPLRIPASAAAQRRGRVGRCKDRDTDSYVYSEETSEDNGHYVCWTEASMLLDNMEVKGGMVAPLYDVEAQKTEMVPGEARLRDDQRKVFRTLIKRYDLPVWVSWQVAKSGLMLEDRKWCFDGDDENTILNDNGEKILARSPGGQRKFLCPRWNDSRLYYDNASLMSFLAFAEGRRSYLGVWHAVQMAPLKLGEKLTESLDTMVMLMRSEEGTRAYKLASTNAPEAVTILLMTGIVVACTLGVGLAFMWPKGVDKMSMGMITMSIAGYLMLQGGLTPVQVASVLLIFFIFMVVLIPEAGTQRSINDNKTLYVLLGVALLIGAITANEMGYLEKTKRDLLGERVQNEWKLELPMFDLRPGAAWSIYVGLATLVMPVLDHWIRTEYGSLSLTGIAQQASILQAMDKGVPFFKLNMSVIVLLVSVWNNFSMLSVLCGVGLLGVHCAFVLPGLRAQAAKQAQRRVYHGVAKNPVVDGQTTAEIETAPEMPPLYEKKLALVLLGVVAIANGVMVRSAFSMAETVVLLSAAVGPLLEGNTSAIWNGPMAVAMAGIMRGNYYAGIGLAYNLWILQSPKRGRSTTMTLGELWKRQLNLMGKREFELYKITDIHEVDRSQAQAVMKAGIDNVGISVSRGTSKLKWMVDRNYVEPLGRVVDLGCGRGGWSYLCAASKRVSSVKAYTLGITGHEKPVNVQSLGWNIIKFKDKTDVFKMEPHACETLLCDIGESSSNPLVEMERTLKVIDNVERWMSPTTESYCFKVLAPYRPEVIERLERFQLKYGGGIVRVPFSRNSTHEMYYVSGVKNNLTHMVSCVSRLLLRRMTHPDGRCKVEADVVFPTGTRNVASDLGPMDLSKVKDRVNRLRSEQGTWFQDDSHPYRTWHYLGSYVAKQSGSAATMVNGVVKMLSMPWDRIENVTQLAMTDTTPYGQQRVFKEKVDTRAPPPPPGTRAIMEVVNKWMFDFLAREKAPRICTKEEFINKVRSNAALGNMLEEQDGWKDAATAVQDPRFWALVDRERQVHLEGRCETCIYNMMGKREKKPAEFGKAKGSRAIWYMWLGARFLEFEALGFLNEDHWFGRENSLAGVEGVGLQYLGYVVKNVWEKSNGIMYADDTAGWDTRVTEADLDDEQYLLSKMEGYHKKLASAVMNMTYKYKVVKVPRPGPGGKVFMDVIARQDQRGSGQVVTYPLNTGTNMKVQLIRMAEGEGVISRHDIERVTIKTLNALRVWLAENGAERLSRMAVSGDDCVVAPLDERFGLALHHLNAMSKIRKDIDDWTESIPWRSWESVPFCSHHFHQLFLKDGRSIVVPCRDQDELVGRARVSPGNGWKLKETACLSKAYAQMWLLMYFHKRDLRLMGNAICSSVPAHWVPTGRTTWSIHAHNEWISSERMLDVWNKVWIVDNPHMPDKTCIDDWRDVPYLPKSQDRLCGSLIGITARASWAENIRAVVNKIRGMIGNEVYSDHLSVMGRYTYSVQEVGTVL</sequence>
<name>POLG_EHV</name>
<reference key="1">
    <citation type="journal article" date="2010" name="J. Gen. Virol.">
        <title>Genomics and evolution of Aedes-borne flaviviruses.</title>
        <authorList>
            <person name="Grard G."/>
            <person name="Moureau G."/>
            <person name="Charrel R.N."/>
            <person name="Holmes E.C."/>
            <person name="Gould E.A."/>
            <person name="de Lamballerie X."/>
        </authorList>
    </citation>
    <scope>NUCLEOTIDE SEQUENCE [LARGE SCALE GENOMIC RNA]</scope>
    <source>
        <strain evidence="18">YMP 48</strain>
    </source>
</reference>
<feature type="chain" id="PRO_0000441470" description="Genome polyprotein">
    <location>
        <begin position="1"/>
        <end position="3401"/>
    </location>
</feature>
<feature type="chain" id="PRO_0000441471" description="Capsid protein C" evidence="2">
    <location>
        <begin position="1"/>
        <end position="100"/>
    </location>
</feature>
<feature type="propeptide" id="PRO_0000441472" description="ER anchor for the capsid protein C, removed in mature form by serine protease NS3" evidence="2">
    <location>
        <begin position="101"/>
        <end position="117"/>
    </location>
</feature>
<feature type="chain" id="PRO_0000441473" description="Protein prM" evidence="7">
    <location>
        <begin position="118"/>
        <end position="281"/>
    </location>
</feature>
<feature type="chain" id="PRO_0000441474" description="Peptide pr" evidence="7">
    <location>
        <begin position="118"/>
        <end position="206"/>
    </location>
</feature>
<feature type="chain" id="PRO_0000441475" description="Small envelope protein M" evidence="7">
    <location>
        <begin position="207"/>
        <end position="281"/>
    </location>
</feature>
<feature type="chain" id="PRO_0000441476" description="Envelope protein E" evidence="7">
    <location>
        <begin position="282"/>
        <end position="774"/>
    </location>
</feature>
<feature type="chain" id="PRO_0000441477" description="Non-structural protein 1" evidence="2">
    <location>
        <begin position="775"/>
        <end position="1126"/>
    </location>
</feature>
<feature type="chain" id="PRO_0000441478" description="Non-structural protein 2A" evidence="2">
    <location>
        <begin position="1127"/>
        <end position="1351"/>
    </location>
</feature>
<feature type="chain" id="PRO_0000441479" description="Non-structural protein 2A-alpha" evidence="7">
    <location>
        <begin position="1127"/>
        <end position="1317"/>
    </location>
</feature>
<feature type="chain" id="PRO_0000441480" description="Serine protease subunit NS2B" evidence="2">
    <location>
        <begin position="1352"/>
        <end position="1480"/>
    </location>
</feature>
<feature type="chain" id="PRO_0000441481" description="Serine protease NS3" evidence="2">
    <location>
        <begin position="1481"/>
        <end position="2102"/>
    </location>
</feature>
<feature type="chain" id="PRO_0000441482" description="Non-structural protein 4A" evidence="2">
    <location>
        <begin position="2103"/>
        <end position="2228"/>
    </location>
</feature>
<feature type="peptide" id="PRO_0000441483" description="Peptide 2k" evidence="2">
    <location>
        <begin position="2229"/>
        <end position="2251"/>
    </location>
</feature>
<feature type="chain" id="PRO_0000441484" description="Non-structural protein 4B" evidence="2">
    <location>
        <begin position="2252"/>
        <end position="2498"/>
    </location>
</feature>
<feature type="chain" id="PRO_0000441485" description="RNA-directed RNA polymerase NS5" evidence="2">
    <location>
        <begin position="2499"/>
        <end position="3401"/>
    </location>
</feature>
<feature type="topological domain" description="Cytoplasmic" evidence="10">
    <location>
        <begin position="1"/>
        <end position="104"/>
    </location>
</feature>
<feature type="transmembrane region" description="Helical" evidence="10">
    <location>
        <begin position="105"/>
        <end position="125"/>
    </location>
</feature>
<feature type="topological domain" description="Extracellular" evidence="10">
    <location>
        <begin position="126"/>
        <end position="240"/>
    </location>
</feature>
<feature type="transmembrane region" description="Helical" evidence="10">
    <location>
        <begin position="241"/>
        <end position="261"/>
    </location>
</feature>
<feature type="topological domain" description="Cytoplasmic" evidence="10">
    <location>
        <begin position="262"/>
        <end position="266"/>
    </location>
</feature>
<feature type="transmembrane region" description="Helical" evidence="17">
    <location>
        <begin position="267"/>
        <end position="281"/>
    </location>
</feature>
<feature type="topological domain" description="Extracellular" evidence="10">
    <location>
        <begin position="282"/>
        <end position="725"/>
    </location>
</feature>
<feature type="transmembrane region" description="Helical" evidence="10">
    <location>
        <begin position="726"/>
        <end position="746"/>
    </location>
</feature>
<feature type="topological domain" description="Extracellular" evidence="10">
    <location>
        <begin position="747"/>
        <end position="753"/>
    </location>
</feature>
<feature type="transmembrane region" description="Helical" evidence="10">
    <location>
        <begin position="754"/>
        <end position="774"/>
    </location>
</feature>
<feature type="topological domain" description="Extracellular" evidence="10">
    <location>
        <begin position="775"/>
        <end position="1122"/>
    </location>
</feature>
<feature type="transmembrane region" description="Helical" evidence="10">
    <location>
        <begin position="1123"/>
        <end position="1143"/>
    </location>
</feature>
<feature type="topological domain" description="Cytoplasmic" evidence="10">
    <location>
        <begin position="1144"/>
        <end position="1198"/>
    </location>
</feature>
<feature type="transmembrane region" description="Helical" evidence="10">
    <location>
        <begin position="1199"/>
        <end position="1219"/>
    </location>
</feature>
<feature type="topological domain" description="Lumenal" evidence="10">
    <location>
        <begin position="1220"/>
        <end position="1287"/>
    </location>
</feature>
<feature type="transmembrane region" description="Helical" evidence="10">
    <location>
        <begin position="1288"/>
        <end position="1308"/>
    </location>
</feature>
<feature type="topological domain" description="Cytoplasmic" evidence="10">
    <location>
        <begin position="1309"/>
        <end position="1352"/>
    </location>
</feature>
<feature type="transmembrane region" description="Helical" evidence="10">
    <location>
        <begin position="1353"/>
        <end position="1373"/>
    </location>
</feature>
<feature type="topological domain" description="Lumenal" evidence="10">
    <location>
        <begin position="1374"/>
        <end position="1376"/>
    </location>
</feature>
<feature type="transmembrane region" description="Helical" evidence="10">
    <location>
        <begin position="1377"/>
        <end position="1397"/>
    </location>
</feature>
<feature type="topological domain" description="Cytoplasmic" evidence="10">
    <location>
        <begin position="1398"/>
        <end position="1447"/>
    </location>
</feature>
<feature type="intramembrane region" description="Helical" evidence="10">
    <location>
        <begin position="1448"/>
        <end position="1468"/>
    </location>
</feature>
<feature type="topological domain" description="Cytoplasmic" evidence="10">
    <location>
        <begin position="1469"/>
        <end position="2154"/>
    </location>
</feature>
<feature type="transmembrane region" description="Helical" evidence="10">
    <location>
        <begin position="2155"/>
        <end position="2175"/>
    </location>
</feature>
<feature type="topological domain" description="Lumenal" evidence="10">
    <location>
        <begin position="2176"/>
        <end position="2181"/>
    </location>
</feature>
<feature type="intramembrane region" description="Helical" evidence="10">
    <location>
        <begin position="2182"/>
        <end position="2200"/>
    </location>
</feature>
<feature type="topological domain" description="Lumenal" evidence="10">
    <location>
        <position position="2201"/>
    </location>
</feature>
<feature type="transmembrane region" description="Helical" evidence="17">
    <location>
        <begin position="2202"/>
        <end position="2222"/>
    </location>
</feature>
<feature type="topological domain" description="Cytoplasmic" evidence="10">
    <location>
        <begin position="2223"/>
        <end position="2235"/>
    </location>
</feature>
<feature type="transmembrane region" description="Helical; Note=Signal for NS4B" evidence="17">
    <location>
        <begin position="2236"/>
        <end position="2250"/>
    </location>
</feature>
<feature type="topological domain" description="Cytoplasmic" evidence="10">
    <location>
        <begin position="2251"/>
        <end position="2285"/>
    </location>
</feature>
<feature type="intramembrane region" description="Helical" evidence="10">
    <location>
        <begin position="2286"/>
        <end position="2306"/>
    </location>
</feature>
<feature type="topological domain" description="Lumenal" evidence="10">
    <location>
        <begin position="2307"/>
        <end position="2354"/>
    </location>
</feature>
<feature type="transmembrane region" description="Helical" evidence="10">
    <location>
        <begin position="2355"/>
        <end position="2375"/>
    </location>
</feature>
<feature type="topological domain" description="Cytoplasmic" evidence="10">
    <location>
        <begin position="2376"/>
        <end position="2418"/>
    </location>
</feature>
<feature type="transmembrane region" description="Helical" evidence="10">
    <location>
        <begin position="2419"/>
        <end position="2439"/>
    </location>
</feature>
<feature type="topological domain" description="Lumenal" evidence="10">
    <location>
        <begin position="2440"/>
        <end position="2467"/>
    </location>
</feature>
<feature type="transmembrane region" description="Helical" evidence="10">
    <location>
        <begin position="2468"/>
        <end position="2488"/>
    </location>
</feature>
<feature type="topological domain" description="Cytoplasmic" evidence="10">
    <location>
        <begin position="2489"/>
        <end position="3401"/>
    </location>
</feature>
<feature type="domain" description="Peptidase S7" evidence="15">
    <location>
        <begin position="1481"/>
        <end position="1661"/>
    </location>
</feature>
<feature type="domain" description="Helicase ATP-binding" evidence="12">
    <location>
        <begin position="1665"/>
        <end position="1821"/>
    </location>
</feature>
<feature type="domain" description="Helicase C-terminal" evidence="13">
    <location>
        <begin position="1816"/>
        <end position="1995"/>
    </location>
</feature>
<feature type="domain" description="mRNA cap 0-1 NS5-type MT" evidence="16">
    <location>
        <begin position="2499"/>
        <end position="2763"/>
    </location>
</feature>
<feature type="domain" description="RdRp catalytic" evidence="11">
    <location>
        <begin position="3026"/>
        <end position="3178"/>
    </location>
</feature>
<feature type="region of interest" description="Fusion peptide" evidence="4">
    <location>
        <begin position="379"/>
        <end position="392"/>
    </location>
</feature>
<feature type="region of interest" description="Interacts with and activates NS3 protease" evidence="14">
    <location>
        <begin position="1404"/>
        <end position="1443"/>
    </location>
</feature>
<feature type="region of interest" description="Important for RNA-binding" evidence="5">
    <location>
        <begin position="1669"/>
        <end position="1672"/>
    </location>
</feature>
<feature type="short sequence motif" description="DEAH box" evidence="12">
    <location>
        <begin position="1769"/>
        <end position="1772"/>
    </location>
</feature>
<feature type="short sequence motif" description="Nuclear localization signal" evidence="1">
    <location>
        <begin position="2869"/>
        <end position="2902"/>
    </location>
</feature>
<feature type="active site" description="Charge relay system; for serine protease NS3 activity" evidence="15">
    <location>
        <position position="1532"/>
    </location>
</feature>
<feature type="active site" description="Charge relay system; for serine protease NS3 activity" evidence="15">
    <location>
        <position position="1556"/>
    </location>
</feature>
<feature type="active site" description="Charge relay system; for serine protease NS3 activity" evidence="15">
    <location>
        <position position="1617"/>
    </location>
</feature>
<feature type="active site" description="For 2'-O-MTase activity" evidence="8">
    <location>
        <position position="2559"/>
    </location>
</feature>
<feature type="active site" description="For 2'-O-MTase activity" evidence="8">
    <location>
        <position position="2644"/>
    </location>
</feature>
<feature type="active site" description="For 2'-O-MTase activity" evidence="8">
    <location>
        <position position="2680"/>
    </location>
</feature>
<feature type="active site" description="For 2'-O-MTase activity" evidence="8">
    <location>
        <position position="2716"/>
    </location>
</feature>
<feature type="binding site" evidence="12">
    <location>
        <begin position="1678"/>
        <end position="1685"/>
    </location>
    <ligand>
        <name>ATP</name>
        <dbReference type="ChEBI" id="CHEBI:30616"/>
    </ligand>
</feature>
<feature type="binding site" evidence="16">
    <location>
        <position position="2554"/>
    </location>
    <ligand>
        <name>S-adenosyl-L-methionine</name>
        <dbReference type="ChEBI" id="CHEBI:59789"/>
    </ligand>
</feature>
<feature type="binding site" evidence="16">
    <location>
        <position position="2584"/>
    </location>
    <ligand>
        <name>S-adenosyl-L-methionine</name>
        <dbReference type="ChEBI" id="CHEBI:59789"/>
    </ligand>
</feature>
<feature type="binding site" evidence="16">
    <location>
        <position position="2585"/>
    </location>
    <ligand>
        <name>S-adenosyl-L-methionine</name>
        <dbReference type="ChEBI" id="CHEBI:59789"/>
    </ligand>
</feature>
<feature type="binding site" evidence="16">
    <location>
        <position position="2602"/>
    </location>
    <ligand>
        <name>S-adenosyl-L-methionine</name>
        <dbReference type="ChEBI" id="CHEBI:59789"/>
    </ligand>
</feature>
<feature type="binding site" evidence="16">
    <location>
        <position position="2603"/>
    </location>
    <ligand>
        <name>S-adenosyl-L-methionine</name>
        <dbReference type="ChEBI" id="CHEBI:59789"/>
    </ligand>
</feature>
<feature type="binding site" evidence="16">
    <location>
        <position position="2629"/>
    </location>
    <ligand>
        <name>S-adenosyl-L-methionine</name>
        <dbReference type="ChEBI" id="CHEBI:59789"/>
    </ligand>
</feature>
<feature type="binding site" evidence="16">
    <location>
        <position position="2630"/>
    </location>
    <ligand>
        <name>S-adenosyl-L-methionine</name>
        <dbReference type="ChEBI" id="CHEBI:59789"/>
    </ligand>
</feature>
<feature type="binding site" evidence="16">
    <location>
        <position position="2645"/>
    </location>
    <ligand>
        <name>S-adenosyl-L-methionine</name>
        <dbReference type="ChEBI" id="CHEBI:59789"/>
    </ligand>
</feature>
<feature type="binding site" evidence="16">
    <location>
        <position position="2718"/>
    </location>
    <ligand>
        <name>S-adenosyl-L-methionine</name>
        <dbReference type="ChEBI" id="CHEBI:59789"/>
    </ligand>
</feature>
<feature type="binding site" evidence="3">
    <location>
        <position position="2936"/>
    </location>
    <ligand>
        <name>Zn(2+)</name>
        <dbReference type="ChEBI" id="CHEBI:29105"/>
        <label>1</label>
    </ligand>
</feature>
<feature type="binding site" evidence="3">
    <location>
        <position position="2940"/>
    </location>
    <ligand>
        <name>Zn(2+)</name>
        <dbReference type="ChEBI" id="CHEBI:29105"/>
        <label>1</label>
    </ligand>
</feature>
<feature type="binding site" evidence="3">
    <location>
        <position position="2945"/>
    </location>
    <ligand>
        <name>Zn(2+)</name>
        <dbReference type="ChEBI" id="CHEBI:29105"/>
        <label>1</label>
    </ligand>
</feature>
<feature type="binding site" evidence="3">
    <location>
        <position position="2948"/>
    </location>
    <ligand>
        <name>Zn(2+)</name>
        <dbReference type="ChEBI" id="CHEBI:29105"/>
        <label>1</label>
    </ligand>
</feature>
<feature type="binding site" evidence="3">
    <location>
        <position position="3213"/>
    </location>
    <ligand>
        <name>Zn(2+)</name>
        <dbReference type="ChEBI" id="CHEBI:29105"/>
        <label>2</label>
    </ligand>
</feature>
<feature type="binding site" evidence="3">
    <location>
        <position position="3229"/>
    </location>
    <ligand>
        <name>Zn(2+)</name>
        <dbReference type="ChEBI" id="CHEBI:29105"/>
        <label>2</label>
    </ligand>
</feature>
<feature type="binding site" evidence="3">
    <location>
        <position position="3348"/>
    </location>
    <ligand>
        <name>Zn(2+)</name>
        <dbReference type="ChEBI" id="CHEBI:29105"/>
        <label>2</label>
    </ligand>
</feature>
<feature type="site" description="Cleavage; by viral protease NS3" evidence="2">
    <location>
        <begin position="100"/>
        <end position="101"/>
    </location>
</feature>
<feature type="site" description="Cleavage; by host signal peptidase" evidence="2">
    <location>
        <begin position="117"/>
        <end position="118"/>
    </location>
</feature>
<feature type="site" description="Cleavage; by host furin" evidence="7">
    <location>
        <begin position="206"/>
        <end position="207"/>
    </location>
</feature>
<feature type="site" description="Cleavage; by host signal peptidase" evidence="7">
    <location>
        <begin position="281"/>
        <end position="282"/>
    </location>
</feature>
<feature type="site" description="Cleavage; by host signal peptidase" evidence="2">
    <location>
        <begin position="774"/>
        <end position="775"/>
    </location>
</feature>
<feature type="site" description="Cleavage; by host" evidence="7">
    <location>
        <begin position="1126"/>
        <end position="1127"/>
    </location>
</feature>
<feature type="site" description="Cleavage; by viral protease NS3" evidence="7">
    <location>
        <begin position="1351"/>
        <end position="1352"/>
    </location>
</feature>
<feature type="site" description="Cleavage; by host" evidence="7">
    <location>
        <begin position="1480"/>
        <end position="1481"/>
    </location>
</feature>
<feature type="site" description="Involved in NS3 ATPase and RTPase activities" evidence="3">
    <location>
        <position position="1940"/>
    </location>
</feature>
<feature type="site" description="Involved in NS3 ATPase and RTPase activities" evidence="3">
    <location>
        <position position="1943"/>
    </location>
</feature>
<feature type="site" description="Cleavage; by autolysis" evidence="2">
    <location>
        <begin position="2102"/>
        <end position="2103"/>
    </location>
</feature>
<feature type="site" description="Cleavage; by viral protease NS3" evidence="7">
    <location>
        <begin position="2228"/>
        <end position="2229"/>
    </location>
</feature>
<feature type="site" description="Cleavage; by host signal peptidase" evidence="7">
    <location>
        <begin position="2251"/>
        <end position="2252"/>
    </location>
</feature>
<feature type="site" description="Cleavage; by viral protease NS3" evidence="2">
    <location>
        <begin position="2498"/>
        <end position="2499"/>
    </location>
</feature>
<feature type="site" description="mRNA cap binding" evidence="16">
    <location>
        <position position="2511"/>
    </location>
</feature>
<feature type="site" description="mRNA cap binding; via carbonyl oxygen" evidence="16">
    <location>
        <position position="2514"/>
    </location>
</feature>
<feature type="site" description="mRNA cap binding" evidence="16">
    <location>
        <position position="2515"/>
    </location>
</feature>
<feature type="site" description="mRNA cap binding; via carbonyl oxygen" evidence="16">
    <location>
        <position position="2517"/>
    </location>
</feature>
<feature type="site" description="mRNA cap binding" evidence="16">
    <location>
        <position position="2522"/>
    </location>
</feature>
<feature type="site" description="mRNA cap binding" evidence="16">
    <location>
        <position position="2526"/>
    </location>
</feature>
<feature type="site" description="Essential for 2'-O-methyltransferase activity" evidence="16">
    <location>
        <position position="2559"/>
    </location>
</feature>
<feature type="site" description="Essential for 2'-O-methyltransferase and N-7 methyltransferase activity" evidence="16">
    <location>
        <position position="2644"/>
    </location>
</feature>
<feature type="site" description="mRNA cap binding" evidence="16">
    <location>
        <position position="2648"/>
    </location>
</feature>
<feature type="site" description="Essential for 2'-O-methyltransferase activity" evidence="16">
    <location>
        <position position="2680"/>
    </location>
</feature>
<feature type="site" description="mRNA cap binding" evidence="16">
    <location>
        <position position="2711"/>
    </location>
</feature>
<feature type="site" description="mRNA cap binding" evidence="16">
    <location>
        <position position="2713"/>
    </location>
</feature>
<feature type="site" description="Essential for 2'-O-methyltransferase activity" evidence="16">
    <location>
        <position position="2716"/>
    </location>
</feature>
<feature type="modified residue" description="Phosphoserine" evidence="2">
    <location>
        <position position="2554"/>
    </location>
</feature>
<feature type="glycosylation site" description="N-linked (GlcNAc...) asparagine; by host" evidence="10">
    <location>
        <position position="130"/>
    </location>
</feature>
<feature type="glycosylation site" description="N-linked (GlcNAc...) asparagine; by host" evidence="10">
    <location>
        <position position="146"/>
    </location>
</feature>
<feature type="glycosylation site" description="N-linked (GlcNAc...) asparagine; by host" evidence="10">
    <location>
        <position position="904"/>
    </location>
</feature>
<feature type="glycosylation site" description="N-linked (GlcNAc...) asparagine; by host" evidence="10">
    <location>
        <position position="981"/>
    </location>
</feature>
<feature type="disulfide bond" evidence="6">
    <location>
        <begin position="284"/>
        <end position="311"/>
    </location>
</feature>
<feature type="disulfide bond" evidence="6">
    <location>
        <begin position="355"/>
        <end position="386"/>
    </location>
</feature>
<feature type="disulfide bond" evidence="6">
    <location>
        <begin position="373"/>
        <end position="397"/>
    </location>
</feature>
<feature type="disulfide bond" evidence="6">
    <location>
        <begin position="462"/>
        <end position="564"/>
    </location>
</feature>
<feature type="disulfide bond" evidence="6">
    <location>
        <begin position="581"/>
        <end position="611"/>
    </location>
</feature>
<feature type="disulfide bond" evidence="6">
    <location>
        <begin position="778"/>
        <end position="789"/>
    </location>
</feature>
<feature type="disulfide bond" evidence="6">
    <location>
        <begin position="829"/>
        <end position="916"/>
    </location>
</feature>
<feature type="disulfide bond" evidence="6">
    <location>
        <begin position="952"/>
        <end position="997"/>
    </location>
</feature>
<feature type="disulfide bond" evidence="6">
    <location>
        <begin position="1054"/>
        <end position="1103"/>
    </location>
</feature>
<feature type="disulfide bond" evidence="6">
    <location>
        <begin position="1065"/>
        <end position="1087"/>
    </location>
</feature>
<feature type="disulfide bond" evidence="6">
    <location>
        <begin position="1086"/>
        <end position="1090"/>
    </location>
</feature>
<protein>
    <recommendedName>
        <fullName>Genome polyprotein</fullName>
    </recommendedName>
    <component>
        <recommendedName>
            <fullName>Capsid protein C</fullName>
        </recommendedName>
        <alternativeName>
            <fullName>Core protein</fullName>
        </alternativeName>
    </component>
    <component>
        <recommendedName>
            <fullName>Protein prM</fullName>
        </recommendedName>
    </component>
    <component>
        <recommendedName>
            <fullName>Peptide pr</fullName>
        </recommendedName>
    </component>
    <component>
        <recommendedName>
            <fullName>Small envelope protein M</fullName>
        </recommendedName>
        <alternativeName>
            <fullName>Matrix protein</fullName>
        </alternativeName>
    </component>
    <component>
        <recommendedName>
            <fullName>Envelope protein E</fullName>
        </recommendedName>
    </component>
    <component>
        <recommendedName>
            <fullName>Non-structural protein 1</fullName>
            <shortName>NS1</shortName>
        </recommendedName>
    </component>
    <component>
        <recommendedName>
            <fullName>Non-structural protein 2A</fullName>
            <shortName>NS2A</shortName>
        </recommendedName>
    </component>
    <component>
        <recommendedName>
            <fullName>Non-structural protein 2A-alpha</fullName>
            <shortName>NS2A-alpha</shortName>
        </recommendedName>
    </component>
    <component>
        <recommendedName>
            <fullName>Serine protease subunit NS2B</fullName>
        </recommendedName>
        <alternativeName>
            <fullName>Flavivirin protease NS2B regulatory subunit</fullName>
        </alternativeName>
        <alternativeName>
            <fullName>Non-structural protein 2B</fullName>
        </alternativeName>
    </component>
    <component>
        <recommendedName>
            <fullName>Serine protease NS3</fullName>
            <ecNumber>3.4.21.91</ecNumber>
            <ecNumber evidence="9">3.6.1.15</ecNumber>
            <ecNumber evidence="9">3.6.4.13</ecNumber>
        </recommendedName>
        <alternativeName>
            <fullName>Flavivirin protease NS3 catalytic subunit</fullName>
        </alternativeName>
        <alternativeName>
            <fullName>Non-structural protein 3</fullName>
        </alternativeName>
    </component>
    <component>
        <recommendedName>
            <fullName>Non-structural protein 4A</fullName>
            <shortName>NS4A</shortName>
        </recommendedName>
    </component>
    <component>
        <recommendedName>
            <fullName>Peptide 2k</fullName>
        </recommendedName>
    </component>
    <component>
        <recommendedName>
            <fullName>Non-structural protein 4B</fullName>
            <shortName>NS4B</shortName>
        </recommendedName>
    </component>
    <component>
        <recommendedName>
            <fullName>RNA-directed RNA polymerase NS5</fullName>
            <ecNumber evidence="16">2.1.1.56</ecNumber>
            <ecNumber evidence="16">2.1.1.57</ecNumber>
            <ecNumber evidence="11">2.7.7.48</ecNumber>
        </recommendedName>
        <alternativeName>
            <fullName>Non-structural protein 5</fullName>
        </alternativeName>
    </component>
</protein>
<proteinExistence type="inferred from homology"/>
<evidence type="ECO:0000250" key="1"/>
<evidence type="ECO:0000250" key="2">
    <source>
        <dbReference type="UniProtKB" id="P03314"/>
    </source>
</evidence>
<evidence type="ECO:0000250" key="3">
    <source>
        <dbReference type="UniProtKB" id="P14335"/>
    </source>
</evidence>
<evidence type="ECO:0000250" key="4">
    <source>
        <dbReference type="UniProtKB" id="P14336"/>
    </source>
</evidence>
<evidence type="ECO:0000250" key="5">
    <source>
        <dbReference type="UniProtKB" id="P14340"/>
    </source>
</evidence>
<evidence type="ECO:0000250" key="6">
    <source>
        <dbReference type="UniProtKB" id="P17763"/>
    </source>
</evidence>
<evidence type="ECO:0000250" key="7">
    <source>
        <dbReference type="UniProtKB" id="P29990"/>
    </source>
</evidence>
<evidence type="ECO:0000250" key="8">
    <source>
        <dbReference type="UniProtKB" id="Q6YMS4"/>
    </source>
</evidence>
<evidence type="ECO:0000250" key="9">
    <source>
        <dbReference type="UniProtKB" id="Q9Q6P4"/>
    </source>
</evidence>
<evidence type="ECO:0000255" key="10"/>
<evidence type="ECO:0000255" key="11">
    <source>
        <dbReference type="PROSITE-ProRule" id="PRU00539"/>
    </source>
</evidence>
<evidence type="ECO:0000255" key="12">
    <source>
        <dbReference type="PROSITE-ProRule" id="PRU00541"/>
    </source>
</evidence>
<evidence type="ECO:0000255" key="13">
    <source>
        <dbReference type="PROSITE-ProRule" id="PRU00542"/>
    </source>
</evidence>
<evidence type="ECO:0000255" key="14">
    <source>
        <dbReference type="PROSITE-ProRule" id="PRU00859"/>
    </source>
</evidence>
<evidence type="ECO:0000255" key="15">
    <source>
        <dbReference type="PROSITE-ProRule" id="PRU00860"/>
    </source>
</evidence>
<evidence type="ECO:0000255" key="16">
    <source>
        <dbReference type="PROSITE-ProRule" id="PRU00924"/>
    </source>
</evidence>
<evidence type="ECO:0000305" key="17"/>
<evidence type="ECO:0000312" key="18">
    <source>
        <dbReference type="EMBL" id="ABI54476.1"/>
    </source>
</evidence>
<accession>C8XPB2</accession>